<proteinExistence type="evidence at transcript level"/>
<organism>
    <name type="scientific">Bos taurus</name>
    <name type="common">Bovine</name>
    <dbReference type="NCBI Taxonomy" id="9913"/>
    <lineage>
        <taxon>Eukaryota</taxon>
        <taxon>Metazoa</taxon>
        <taxon>Chordata</taxon>
        <taxon>Craniata</taxon>
        <taxon>Vertebrata</taxon>
        <taxon>Euteleostomi</taxon>
        <taxon>Mammalia</taxon>
        <taxon>Eutheria</taxon>
        <taxon>Laurasiatheria</taxon>
        <taxon>Artiodactyla</taxon>
        <taxon>Ruminantia</taxon>
        <taxon>Pecora</taxon>
        <taxon>Bovidae</taxon>
        <taxon>Bovinae</taxon>
        <taxon>Bos</taxon>
    </lineage>
</organism>
<gene>
    <name type="primary">SEH1L</name>
</gene>
<name>SEH1_BOVIN</name>
<protein>
    <recommendedName>
        <fullName evidence="3">Nucleoporin SEH1</fullName>
    </recommendedName>
    <alternativeName>
        <fullName evidence="3">GATOR2 complex protein SEH1</fullName>
    </alternativeName>
    <alternativeName>
        <fullName>Nup107-160 subcomplex subunit SEH1</fullName>
    </alternativeName>
</protein>
<dbReference type="EMBL" id="BC151606">
    <property type="protein sequence ID" value="AAI51607.1"/>
    <property type="molecule type" value="mRNA"/>
</dbReference>
<dbReference type="RefSeq" id="NP_001096559.1">
    <property type="nucleotide sequence ID" value="NM_001103089.2"/>
</dbReference>
<dbReference type="SMR" id="A7YY75"/>
<dbReference type="FunCoup" id="A7YY75">
    <property type="interactions" value="4065"/>
</dbReference>
<dbReference type="STRING" id="9913.ENSBTAP00000045994"/>
<dbReference type="PaxDb" id="9913-ENSBTAP00000045994"/>
<dbReference type="Ensembl" id="ENSBTAT00000049050.5">
    <property type="protein sequence ID" value="ENSBTAP00000045994.3"/>
    <property type="gene ID" value="ENSBTAG00000010792.7"/>
</dbReference>
<dbReference type="GeneID" id="506509"/>
<dbReference type="KEGG" id="bta:506509"/>
<dbReference type="CTD" id="81929"/>
<dbReference type="VEuPathDB" id="HostDB:ENSBTAG00000010792"/>
<dbReference type="VGNC" id="VGNC:34420">
    <property type="gene designation" value="SEH1L"/>
</dbReference>
<dbReference type="eggNOG" id="KOG2445">
    <property type="taxonomic scope" value="Eukaryota"/>
</dbReference>
<dbReference type="GeneTree" id="ENSGT00940000153393"/>
<dbReference type="HOGENOM" id="CLU_032441_1_2_1"/>
<dbReference type="InParanoid" id="A7YY75"/>
<dbReference type="OMA" id="NAPTRRW"/>
<dbReference type="OrthoDB" id="364224at2759"/>
<dbReference type="TreeFam" id="TF105924"/>
<dbReference type="Reactome" id="R-BTA-141444">
    <property type="pathway name" value="Amplification of signal from unattached kinetochores via a MAD2 inhibitory signal"/>
</dbReference>
<dbReference type="Reactome" id="R-BTA-159227">
    <property type="pathway name" value="Transport of the SLBP independent Mature mRNA"/>
</dbReference>
<dbReference type="Reactome" id="R-BTA-159230">
    <property type="pathway name" value="Transport of the SLBP Dependant Mature mRNA"/>
</dbReference>
<dbReference type="Reactome" id="R-BTA-159231">
    <property type="pathway name" value="Transport of Mature mRNA Derived from an Intronless Transcript"/>
</dbReference>
<dbReference type="Reactome" id="R-BTA-159236">
    <property type="pathway name" value="Transport of Mature mRNA derived from an Intron-Containing Transcript"/>
</dbReference>
<dbReference type="Reactome" id="R-BTA-191859">
    <property type="pathway name" value="snRNP Assembly"/>
</dbReference>
<dbReference type="Reactome" id="R-BTA-2467813">
    <property type="pathway name" value="Separation of Sister Chromatids"/>
</dbReference>
<dbReference type="Reactome" id="R-BTA-2500257">
    <property type="pathway name" value="Resolution of Sister Chromatid Cohesion"/>
</dbReference>
<dbReference type="Reactome" id="R-BTA-3108214">
    <property type="pathway name" value="SUMOylation of DNA damage response and repair proteins"/>
</dbReference>
<dbReference type="Reactome" id="R-BTA-3232142">
    <property type="pathway name" value="SUMOylation of ubiquitinylation proteins"/>
</dbReference>
<dbReference type="Reactome" id="R-BTA-3301854">
    <property type="pathway name" value="Nuclear Pore Complex (NPC) Disassembly"/>
</dbReference>
<dbReference type="Reactome" id="R-BTA-3371453">
    <property type="pathway name" value="Regulation of HSF1-mediated heat shock response"/>
</dbReference>
<dbReference type="Reactome" id="R-BTA-4085377">
    <property type="pathway name" value="SUMOylation of SUMOylation proteins"/>
</dbReference>
<dbReference type="Reactome" id="R-BTA-4551638">
    <property type="pathway name" value="SUMOylation of chromatin organization proteins"/>
</dbReference>
<dbReference type="Reactome" id="R-BTA-4570464">
    <property type="pathway name" value="SUMOylation of RNA binding proteins"/>
</dbReference>
<dbReference type="Reactome" id="R-BTA-4615885">
    <property type="pathway name" value="SUMOylation of DNA replication proteins"/>
</dbReference>
<dbReference type="Reactome" id="R-BTA-5578749">
    <property type="pathway name" value="Transcriptional regulation by small RNAs"/>
</dbReference>
<dbReference type="Reactome" id="R-BTA-5663220">
    <property type="pathway name" value="RHO GTPases Activate Formins"/>
</dbReference>
<dbReference type="Reactome" id="R-BTA-68877">
    <property type="pathway name" value="Mitotic Prometaphase"/>
</dbReference>
<dbReference type="Reactome" id="R-BTA-9615933">
    <property type="pathway name" value="Postmitotic nuclear pore complex (NPC) reformation"/>
</dbReference>
<dbReference type="Reactome" id="R-BTA-9639288">
    <property type="pathway name" value="Amino acids regulate mTORC1"/>
</dbReference>
<dbReference type="Reactome" id="R-BTA-9648025">
    <property type="pathway name" value="EML4 and NUDC in mitotic spindle formation"/>
</dbReference>
<dbReference type="Proteomes" id="UP000009136">
    <property type="component" value="Chromosome 24"/>
</dbReference>
<dbReference type="Bgee" id="ENSBTAG00000010792">
    <property type="expression patterns" value="Expressed in spermatocyte and 106 other cell types or tissues"/>
</dbReference>
<dbReference type="GO" id="GO:0061700">
    <property type="term" value="C:GATOR2 complex"/>
    <property type="evidence" value="ECO:0000250"/>
    <property type="project" value="UniProtKB"/>
</dbReference>
<dbReference type="GO" id="GO:0000776">
    <property type="term" value="C:kinetochore"/>
    <property type="evidence" value="ECO:0007669"/>
    <property type="project" value="UniProtKB-KW"/>
</dbReference>
<dbReference type="GO" id="GO:0005765">
    <property type="term" value="C:lysosomal membrane"/>
    <property type="evidence" value="ECO:0000250"/>
    <property type="project" value="UniProtKB"/>
</dbReference>
<dbReference type="GO" id="GO:0031080">
    <property type="term" value="C:nuclear pore outer ring"/>
    <property type="evidence" value="ECO:0000250"/>
    <property type="project" value="UniProtKB"/>
</dbReference>
<dbReference type="GO" id="GO:0035859">
    <property type="term" value="C:Seh1-associated complex"/>
    <property type="evidence" value="ECO:0000318"/>
    <property type="project" value="GO_Central"/>
</dbReference>
<dbReference type="GO" id="GO:0005198">
    <property type="term" value="F:structural molecule activity"/>
    <property type="evidence" value="ECO:0007669"/>
    <property type="project" value="InterPro"/>
</dbReference>
<dbReference type="GO" id="GO:0051315">
    <property type="term" value="P:attachment of mitotic spindle microtubules to kinetochore"/>
    <property type="evidence" value="ECO:0000250"/>
    <property type="project" value="UniProtKB"/>
</dbReference>
<dbReference type="GO" id="GO:0051301">
    <property type="term" value="P:cell division"/>
    <property type="evidence" value="ECO:0007669"/>
    <property type="project" value="UniProtKB-KW"/>
</dbReference>
<dbReference type="GO" id="GO:0034198">
    <property type="term" value="P:cellular response to amino acid starvation"/>
    <property type="evidence" value="ECO:0000318"/>
    <property type="project" value="GO_Central"/>
</dbReference>
<dbReference type="GO" id="GO:0031669">
    <property type="term" value="P:cellular response to nutrient levels"/>
    <property type="evidence" value="ECO:0000250"/>
    <property type="project" value="UniProtKB"/>
</dbReference>
<dbReference type="GO" id="GO:0007080">
    <property type="term" value="P:mitotic metaphase chromosome alignment"/>
    <property type="evidence" value="ECO:0000250"/>
    <property type="project" value="UniProtKB"/>
</dbReference>
<dbReference type="GO" id="GO:0051028">
    <property type="term" value="P:mRNA transport"/>
    <property type="evidence" value="ECO:0007669"/>
    <property type="project" value="UniProtKB-KW"/>
</dbReference>
<dbReference type="GO" id="GO:0006999">
    <property type="term" value="P:nuclear pore organization"/>
    <property type="evidence" value="ECO:0000250"/>
    <property type="project" value="UniProtKB"/>
</dbReference>
<dbReference type="GO" id="GO:1904263">
    <property type="term" value="P:positive regulation of TORC1 signaling"/>
    <property type="evidence" value="ECO:0000250"/>
    <property type="project" value="UniProtKB"/>
</dbReference>
<dbReference type="GO" id="GO:0015031">
    <property type="term" value="P:protein transport"/>
    <property type="evidence" value="ECO:0007669"/>
    <property type="project" value="UniProtKB-KW"/>
</dbReference>
<dbReference type="FunFam" id="2.130.10.10:FF:000063">
    <property type="entry name" value="SEH1 like nucleoporin"/>
    <property type="match status" value="1"/>
</dbReference>
<dbReference type="Gene3D" id="2.130.10.10">
    <property type="entry name" value="YVTN repeat-like/Quinoprotein amine dehydrogenase"/>
    <property type="match status" value="1"/>
</dbReference>
<dbReference type="InterPro" id="IPR020472">
    <property type="entry name" value="G-protein_beta_WD-40_rep"/>
</dbReference>
<dbReference type="InterPro" id="IPR037363">
    <property type="entry name" value="Sec13/Seh1_fam"/>
</dbReference>
<dbReference type="InterPro" id="IPR015943">
    <property type="entry name" value="WD40/YVTN_repeat-like_dom_sf"/>
</dbReference>
<dbReference type="InterPro" id="IPR036322">
    <property type="entry name" value="WD40_repeat_dom_sf"/>
</dbReference>
<dbReference type="InterPro" id="IPR001680">
    <property type="entry name" value="WD40_rpt"/>
</dbReference>
<dbReference type="PANTHER" id="PTHR11024">
    <property type="entry name" value="NUCLEAR PORE COMPLEX PROTEIN SEC13 / SEH1 FAMILY MEMBER"/>
    <property type="match status" value="1"/>
</dbReference>
<dbReference type="PANTHER" id="PTHR11024:SF3">
    <property type="entry name" value="NUCLEOPORIN SEH1"/>
    <property type="match status" value="1"/>
</dbReference>
<dbReference type="Pfam" id="PF00400">
    <property type="entry name" value="WD40"/>
    <property type="match status" value="4"/>
</dbReference>
<dbReference type="PRINTS" id="PR00320">
    <property type="entry name" value="GPROTEINBRPT"/>
</dbReference>
<dbReference type="SMART" id="SM00320">
    <property type="entry name" value="WD40"/>
    <property type="match status" value="5"/>
</dbReference>
<dbReference type="SUPFAM" id="SSF50978">
    <property type="entry name" value="WD40 repeat-like"/>
    <property type="match status" value="1"/>
</dbReference>
<dbReference type="PROSITE" id="PS50082">
    <property type="entry name" value="WD_REPEATS_2"/>
    <property type="match status" value="2"/>
</dbReference>
<dbReference type="PROSITE" id="PS50294">
    <property type="entry name" value="WD_REPEATS_REGION"/>
    <property type="match status" value="2"/>
</dbReference>
<accession>A7YY75</accession>
<comment type="function">
    <text evidence="1">Component of the Nup107-160 subcomplex of the nuclear pore complex (NPC). The Nup107-160 subcomplex is required for the assembly of a functional NPC. The Nup107-160 subcomplex is also required for normal kinetochore microtubule attachment, mitotic progression and chromosome segregation. This subunit plays a role in recruitment of the Nup107-160 subcomplex to the kinetochore.</text>
</comment>
<comment type="function">
    <text evidence="1">As a component of the GATOR2 complex, functions as an activator of the amino acid-sensing branch of the mTORC1 signaling pathway. The GATOR2 complex indirectly activates mTORC1 through the inhibition of the GATOR1 subcomplex. GATOR2 probably acts as an E3 ubiquitin-protein ligase toward GATOR1. In the presence of abundant amino acids, the GATOR2 complex mediates ubiquitination of the NPRL2 core component of the GATOR1 complex, leading to GATOR1 inactivation. In the absence of amino acids, GATOR2 is inhibited, activating the GATOR1 complex. Within the GATOR2 complex, SEC13 and SEH1L are required to stabilize the complex.</text>
</comment>
<comment type="activity regulation">
    <text evidence="1">The GATOR2 complex is negatively regulated by the upstream amino acid sensors CASTOR1 and SESN2, which sequester the GATOR2 complex in absence of amino acids. In the presence of abundant amino acids, GATOR2 is released from CASTOR1 and SESN2 and activated.</text>
</comment>
<comment type="subunit">
    <text evidence="1">Component of the Nup107-160 subcomplex of the nuclear pore complex (NPC). The Nup107-160 subcomplex includes NUP160, NUP133, NUP107, NUP98, NUP85, NUP43, NUP37, SEH1 and SEC13. The SEH1 subunit appears to be only weakly associated with the Nup107-160 subcomplex. Component of the GATOR2 subcomplex, composed of MIOS, SEC13, SEH1L, WDR24 and WDR59. The GATOR2 complex interacts with CASTOR1 and CASTOR2; the interaction is negatively regulated by arginine. The GATOR2 complex interacts with SESN1, SESN2 and SESN3; the interaction is negatively regulated by amino acids. SESN1, SESN2 and SESN3 convey leucine availability via direct interaction with SEH1L and WDR24.</text>
</comment>
<comment type="subcellular location">
    <subcellularLocation>
        <location evidence="1">Chromosome</location>
        <location evidence="1">Centromere</location>
        <location evidence="1">Kinetochore</location>
    </subcellularLocation>
    <subcellularLocation>
        <location evidence="1">Nucleus</location>
        <location evidence="1">Nuclear pore complex</location>
    </subcellularLocation>
    <subcellularLocation>
        <location evidence="1">Lysosome membrane</location>
    </subcellularLocation>
</comment>
<comment type="similarity">
    <text evidence="3">Belongs to the WD repeat SEC13 family.</text>
</comment>
<feature type="chain" id="PRO_0000373805" description="Nucleoporin SEH1">
    <location>
        <begin position="1"/>
        <end position="360"/>
    </location>
</feature>
<feature type="repeat" description="WD 1">
    <location>
        <begin position="10"/>
        <end position="49"/>
    </location>
</feature>
<feature type="repeat" description="WD 2">
    <location>
        <begin position="55"/>
        <end position="96"/>
    </location>
</feature>
<feature type="repeat" description="WD 3">
    <location>
        <begin position="111"/>
        <end position="152"/>
    </location>
</feature>
<feature type="repeat" description="WD 4">
    <location>
        <begin position="160"/>
        <end position="210"/>
    </location>
</feature>
<feature type="repeat" description="WD 5">
    <location>
        <begin position="217"/>
        <end position="258"/>
    </location>
</feature>
<feature type="repeat" description="WD 6">
    <location>
        <begin position="276"/>
        <end position="315"/>
    </location>
</feature>
<feature type="region of interest" description="Disordered" evidence="2">
    <location>
        <begin position="324"/>
        <end position="360"/>
    </location>
</feature>
<feature type="compositionally biased region" description="Low complexity" evidence="2">
    <location>
        <begin position="324"/>
        <end position="342"/>
    </location>
</feature>
<feature type="compositionally biased region" description="Polar residues" evidence="2">
    <location>
        <begin position="343"/>
        <end position="354"/>
    </location>
</feature>
<feature type="modified residue" description="Phosphoserine" evidence="1">
    <location>
        <position position="190"/>
    </location>
</feature>
<feature type="cross-link" description="Glycyl lysine isopeptide (Lys-Gly) (interchain with G-Cter in SUMO2)" evidence="1">
    <location>
        <position position="12"/>
    </location>
</feature>
<evidence type="ECO:0000250" key="1">
    <source>
        <dbReference type="UniProtKB" id="Q96EE3"/>
    </source>
</evidence>
<evidence type="ECO:0000256" key="2">
    <source>
        <dbReference type="SAM" id="MobiDB-lite"/>
    </source>
</evidence>
<evidence type="ECO:0000305" key="3"/>
<keyword id="KW-0131">Cell cycle</keyword>
<keyword id="KW-0132">Cell division</keyword>
<keyword id="KW-0137">Centromere</keyword>
<keyword id="KW-0158">Chromosome</keyword>
<keyword id="KW-0159">Chromosome partition</keyword>
<keyword id="KW-1017">Isopeptide bond</keyword>
<keyword id="KW-0995">Kinetochore</keyword>
<keyword id="KW-0458">Lysosome</keyword>
<keyword id="KW-0472">Membrane</keyword>
<keyword id="KW-0498">Mitosis</keyword>
<keyword id="KW-0509">mRNA transport</keyword>
<keyword id="KW-0906">Nuclear pore complex</keyword>
<keyword id="KW-0539">Nucleus</keyword>
<keyword id="KW-0597">Phosphoprotein</keyword>
<keyword id="KW-0653">Protein transport</keyword>
<keyword id="KW-1185">Reference proteome</keyword>
<keyword id="KW-0677">Repeat</keyword>
<keyword id="KW-0811">Translocation</keyword>
<keyword id="KW-0813">Transport</keyword>
<keyword id="KW-0832">Ubl conjugation</keyword>
<keyword id="KW-0853">WD repeat</keyword>
<sequence length="360" mass="39641">MFVARSIAADHKDLIHDVSFDFHGRRMATCSSDQSVKVWDKSESGEWHCTASWKTHSGSVWRVTWAHPEFGQVLASCSFDRTAAVWEEIVGESNDKLRGQSHWVKRTTLVDSRTSVTDVKFAPKHMGLMLATCSADGIVRIYEAPDVMNLSQWSLQHEISCKLSCSCISWNPSSSRAHAPMIAVGSDDSSPNAMAKVQIFEYNENTRKYAKAETLLTVTDPVHDIAFAPNLGRSFHILAIATKDVRIFTLKPVRKELTSSGGPTKFEIHIVAQFDNHNSQVWRVSWNITGTVLASSGDDGCVRLWKANYMDNWKCTGILKGNGSPVNGSSQQGNSNPSVGSNIPSLQNSLNGSSAGRKHS</sequence>
<reference key="1">
    <citation type="submission" date="2007-07" db="EMBL/GenBank/DDBJ databases">
        <authorList>
            <consortium name="NIH - Mammalian Gene Collection (MGC) project"/>
        </authorList>
    </citation>
    <scope>NUCLEOTIDE SEQUENCE [LARGE SCALE MRNA]</scope>
    <source>
        <strain>Hereford</strain>
        <tissue>Fetal brain</tissue>
    </source>
</reference>